<comment type="function">
    <text evidence="1">DNA-dependent RNA polymerase catalyzes the transcription of DNA into RNA using the four ribonucleoside triphosphates as substrates.</text>
</comment>
<comment type="catalytic activity">
    <reaction evidence="1">
        <text>RNA(n) + a ribonucleoside 5'-triphosphate = RNA(n+1) + diphosphate</text>
        <dbReference type="Rhea" id="RHEA:21248"/>
        <dbReference type="Rhea" id="RHEA-COMP:14527"/>
        <dbReference type="Rhea" id="RHEA-COMP:17342"/>
        <dbReference type="ChEBI" id="CHEBI:33019"/>
        <dbReference type="ChEBI" id="CHEBI:61557"/>
        <dbReference type="ChEBI" id="CHEBI:140395"/>
        <dbReference type="EC" id="2.7.7.6"/>
    </reaction>
</comment>
<comment type="subunit">
    <text evidence="1">The RNAP catalytic core consists of 2 alpha, 1 beta, 1 beta' and 1 omega subunit. When a sigma factor is associated with the core the holoenzyme is formed, which can initiate transcription.</text>
</comment>
<comment type="similarity">
    <text evidence="1">Belongs to the RNA polymerase beta chain family.</text>
</comment>
<name>RPOB_NEOSM</name>
<reference key="1">
    <citation type="journal article" date="2006" name="PLoS Genet.">
        <title>Comparative genomics of emerging human ehrlichiosis agents.</title>
        <authorList>
            <person name="Dunning Hotopp J.C."/>
            <person name="Lin M."/>
            <person name="Madupu R."/>
            <person name="Crabtree J."/>
            <person name="Angiuoli S.V."/>
            <person name="Eisen J.A."/>
            <person name="Seshadri R."/>
            <person name="Ren Q."/>
            <person name="Wu M."/>
            <person name="Utterback T.R."/>
            <person name="Smith S."/>
            <person name="Lewis M."/>
            <person name="Khouri H."/>
            <person name="Zhang C."/>
            <person name="Niu H."/>
            <person name="Lin Q."/>
            <person name="Ohashi N."/>
            <person name="Zhi N."/>
            <person name="Nelson W.C."/>
            <person name="Brinkac L.M."/>
            <person name="Dodson R.J."/>
            <person name="Rosovitz M.J."/>
            <person name="Sundaram J.P."/>
            <person name="Daugherty S.C."/>
            <person name="Davidsen T."/>
            <person name="Durkin A.S."/>
            <person name="Gwinn M.L."/>
            <person name="Haft D.H."/>
            <person name="Selengut J.D."/>
            <person name="Sullivan S.A."/>
            <person name="Zafar N."/>
            <person name="Zhou L."/>
            <person name="Benahmed F."/>
            <person name="Forberger H."/>
            <person name="Halpin R."/>
            <person name="Mulligan S."/>
            <person name="Robinson J."/>
            <person name="White O."/>
            <person name="Rikihisa Y."/>
            <person name="Tettelin H."/>
        </authorList>
    </citation>
    <scope>NUCLEOTIDE SEQUENCE [LARGE SCALE GENOMIC DNA]</scope>
    <source>
        <strain>ATCC VR-367 / Miyayama</strain>
    </source>
</reference>
<protein>
    <recommendedName>
        <fullName evidence="1">DNA-directed RNA polymerase subunit beta</fullName>
        <shortName evidence="1">RNAP subunit beta</shortName>
        <ecNumber evidence="1">2.7.7.6</ecNumber>
    </recommendedName>
    <alternativeName>
        <fullName evidence="1">RNA polymerase subunit beta</fullName>
    </alternativeName>
    <alternativeName>
        <fullName evidence="1">Transcriptase subunit beta</fullName>
    </alternativeName>
</protein>
<organism>
    <name type="scientific">Neorickettsia sennetsu (strain ATCC VR-367 / Miyayama)</name>
    <name type="common">Ehrlichia sennetsu</name>
    <dbReference type="NCBI Taxonomy" id="222891"/>
    <lineage>
        <taxon>Bacteria</taxon>
        <taxon>Pseudomonadati</taxon>
        <taxon>Pseudomonadota</taxon>
        <taxon>Alphaproteobacteria</taxon>
        <taxon>Rickettsiales</taxon>
        <taxon>Anaplasmataceae</taxon>
        <taxon>Neorickettsia</taxon>
    </lineage>
</organism>
<dbReference type="EC" id="2.7.7.6" evidence="1"/>
<dbReference type="EMBL" id="CP000237">
    <property type="protein sequence ID" value="ABD46017.1"/>
    <property type="molecule type" value="Genomic_DNA"/>
</dbReference>
<dbReference type="RefSeq" id="WP_011452062.1">
    <property type="nucleotide sequence ID" value="NC_007798.1"/>
</dbReference>
<dbReference type="SMR" id="Q2GD90"/>
<dbReference type="STRING" id="222891.NSE_0678"/>
<dbReference type="KEGG" id="nse:NSE_0678"/>
<dbReference type="eggNOG" id="COG0085">
    <property type="taxonomic scope" value="Bacteria"/>
</dbReference>
<dbReference type="HOGENOM" id="CLU_000524_4_0_5"/>
<dbReference type="OrthoDB" id="9803954at2"/>
<dbReference type="Proteomes" id="UP000001942">
    <property type="component" value="Chromosome"/>
</dbReference>
<dbReference type="GO" id="GO:0000428">
    <property type="term" value="C:DNA-directed RNA polymerase complex"/>
    <property type="evidence" value="ECO:0007669"/>
    <property type="project" value="UniProtKB-KW"/>
</dbReference>
<dbReference type="GO" id="GO:0003677">
    <property type="term" value="F:DNA binding"/>
    <property type="evidence" value="ECO:0007669"/>
    <property type="project" value="UniProtKB-UniRule"/>
</dbReference>
<dbReference type="GO" id="GO:0003899">
    <property type="term" value="F:DNA-directed RNA polymerase activity"/>
    <property type="evidence" value="ECO:0007669"/>
    <property type="project" value="UniProtKB-UniRule"/>
</dbReference>
<dbReference type="GO" id="GO:0032549">
    <property type="term" value="F:ribonucleoside binding"/>
    <property type="evidence" value="ECO:0007669"/>
    <property type="project" value="InterPro"/>
</dbReference>
<dbReference type="GO" id="GO:0006351">
    <property type="term" value="P:DNA-templated transcription"/>
    <property type="evidence" value="ECO:0007669"/>
    <property type="project" value="UniProtKB-UniRule"/>
</dbReference>
<dbReference type="CDD" id="cd00653">
    <property type="entry name" value="RNA_pol_B_RPB2"/>
    <property type="match status" value="1"/>
</dbReference>
<dbReference type="Gene3D" id="2.40.50.100">
    <property type="match status" value="1"/>
</dbReference>
<dbReference type="Gene3D" id="2.40.50.150">
    <property type="match status" value="1"/>
</dbReference>
<dbReference type="Gene3D" id="3.90.1100.10">
    <property type="match status" value="2"/>
</dbReference>
<dbReference type="Gene3D" id="6.10.140.1670">
    <property type="match status" value="1"/>
</dbReference>
<dbReference type="Gene3D" id="2.30.150.10">
    <property type="entry name" value="DNA-directed RNA polymerase, beta subunit, external 1 domain"/>
    <property type="match status" value="1"/>
</dbReference>
<dbReference type="Gene3D" id="2.40.270.10">
    <property type="entry name" value="DNA-directed RNA polymerase, subunit 2, domain 6"/>
    <property type="match status" value="2"/>
</dbReference>
<dbReference type="Gene3D" id="3.90.1800.10">
    <property type="entry name" value="RNA polymerase alpha subunit dimerisation domain"/>
    <property type="match status" value="1"/>
</dbReference>
<dbReference type="Gene3D" id="3.90.1110.10">
    <property type="entry name" value="RNA polymerase Rpb2, domain 2"/>
    <property type="match status" value="2"/>
</dbReference>
<dbReference type="HAMAP" id="MF_01321">
    <property type="entry name" value="RNApol_bact_RpoB"/>
    <property type="match status" value="1"/>
</dbReference>
<dbReference type="InterPro" id="IPR042107">
    <property type="entry name" value="DNA-dir_RNA_pol_bsu_ext_1_sf"/>
</dbReference>
<dbReference type="InterPro" id="IPR019462">
    <property type="entry name" value="DNA-dir_RNA_pol_bsu_external_1"/>
</dbReference>
<dbReference type="InterPro" id="IPR015712">
    <property type="entry name" value="DNA-dir_RNA_pol_su2"/>
</dbReference>
<dbReference type="InterPro" id="IPR007120">
    <property type="entry name" value="DNA-dir_RNAP_su2_dom"/>
</dbReference>
<dbReference type="InterPro" id="IPR037033">
    <property type="entry name" value="DNA-dir_RNAP_su2_hyb_sf"/>
</dbReference>
<dbReference type="InterPro" id="IPR010243">
    <property type="entry name" value="RNA_pol_bsu_bac"/>
</dbReference>
<dbReference type="InterPro" id="IPR007121">
    <property type="entry name" value="RNA_pol_bsu_CS"/>
</dbReference>
<dbReference type="InterPro" id="IPR007644">
    <property type="entry name" value="RNA_pol_bsu_protrusion"/>
</dbReference>
<dbReference type="InterPro" id="IPR007642">
    <property type="entry name" value="RNA_pol_Rpb2_2"/>
</dbReference>
<dbReference type="InterPro" id="IPR037034">
    <property type="entry name" value="RNA_pol_Rpb2_2_sf"/>
</dbReference>
<dbReference type="InterPro" id="IPR007645">
    <property type="entry name" value="RNA_pol_Rpb2_3"/>
</dbReference>
<dbReference type="InterPro" id="IPR007641">
    <property type="entry name" value="RNA_pol_Rpb2_7"/>
</dbReference>
<dbReference type="InterPro" id="IPR014724">
    <property type="entry name" value="RNA_pol_RPB2_OB-fold"/>
</dbReference>
<dbReference type="NCBIfam" id="NF001616">
    <property type="entry name" value="PRK00405.1"/>
    <property type="match status" value="1"/>
</dbReference>
<dbReference type="NCBIfam" id="TIGR02013">
    <property type="entry name" value="rpoB"/>
    <property type="match status" value="1"/>
</dbReference>
<dbReference type="PANTHER" id="PTHR20856">
    <property type="entry name" value="DNA-DIRECTED RNA POLYMERASE I SUBUNIT 2"/>
    <property type="match status" value="1"/>
</dbReference>
<dbReference type="Pfam" id="PF04563">
    <property type="entry name" value="RNA_pol_Rpb2_1"/>
    <property type="match status" value="1"/>
</dbReference>
<dbReference type="Pfam" id="PF04561">
    <property type="entry name" value="RNA_pol_Rpb2_2"/>
    <property type="match status" value="2"/>
</dbReference>
<dbReference type="Pfam" id="PF04565">
    <property type="entry name" value="RNA_pol_Rpb2_3"/>
    <property type="match status" value="1"/>
</dbReference>
<dbReference type="Pfam" id="PF10385">
    <property type="entry name" value="RNA_pol_Rpb2_45"/>
    <property type="match status" value="1"/>
</dbReference>
<dbReference type="Pfam" id="PF00562">
    <property type="entry name" value="RNA_pol_Rpb2_6"/>
    <property type="match status" value="1"/>
</dbReference>
<dbReference type="Pfam" id="PF04560">
    <property type="entry name" value="RNA_pol_Rpb2_7"/>
    <property type="match status" value="1"/>
</dbReference>
<dbReference type="SUPFAM" id="SSF64484">
    <property type="entry name" value="beta and beta-prime subunits of DNA dependent RNA-polymerase"/>
    <property type="match status" value="1"/>
</dbReference>
<dbReference type="PROSITE" id="PS01166">
    <property type="entry name" value="RNA_POL_BETA"/>
    <property type="match status" value="1"/>
</dbReference>
<feature type="chain" id="PRO_0000237306" description="DNA-directed RNA polymerase subunit beta">
    <location>
        <begin position="1"/>
        <end position="1358"/>
    </location>
</feature>
<sequence>MSEFHRLYFDELLFDFPDLVKVQKDSYASFVGGGDTVFSISDIFASVFPVNDGYGRASLEFVSCRMGEPKHDEYGCVERGITYSAPLRAILRLVVFGDETSGEGSEGVSTEPAVKDVREQEIYMGDIPIMSKNGTFIINGVERVVVSQMHRAPGVFFDNDKARSISGKLNYIARIIPYRGSWLDFEFDAKDVLYFRIDKKRKLPVTFLLRALGLSNKDIFAQFCEVSECRLTKDGKWTVCFVPEKFKGVRLQYDLINAETGELVLAKGNRISIVLARNLYAKGLRYCYMDLEVMKDMYLADDLVSTKGEVLLPHGTKLTKEHVAKLEFLDVDSIKLVELKGNYVFSTVLQYDCSYEEAMLSIYRVVRPGEIPSVESAEKLFESLFFSPERYDLLNVGRIRLNAKFNLSHDESLTVLTKEDIFCTVKELALLQREVGDVDDIDHLGNRRVRSVGEFMDNQFRIGLVRMAKVIVENMATADFDTVMPCEMINSKILGAVIREFFMSSALSQFMDQTNPLSEITHKRRISALGPGGLNRGRAGFEVRDVHTTHYGRICATETPEGATIGLINSLAIYAKINKYGFIETPYRYVRDGRVTDEVTYLSAIDEIKANICQASVRVDEEGYIVDDLVYCRRNYENVFIPRSEVQFADVSAKQIVSVAASLIPFLENDDANRALMGSNMQRQAVPLIMPEAPLVGTGMEGYVARGSGAVIVAKRAGVVQYIDARNIVVASESKDDFWIDSYTLCKFRKSNHNTCIHQRCVVHQGQRVKKGDILADGPAIQKGELALGRNLVVAFLSWRGYNFEDSVVISSNVVRDDLFTSVHLEGFECVVRDTRLGPEEITRDVSGVAEEFLHCLDEFGIACVGANVEAGDVLVGKVTPKSSSPVTPEEKLLRAIFGEKAIDVKDSSLYLPPGVSGCVVDVKVLQRRGIEKVGRALLIEKQAIDAEKTRRDHELAVLTNYIYSLLKEMLVGKVALSTLAPISKGDLITEEALEKIDRENWWKISVDGISSIKLLRQRFVDRFDEINKTYEENFEKIRGDDDLAQGVLMVVKVFVAVKHTLQPGDKMSGRHGNKGVISRIVPAEDMPYLADGTPVDIILNPLGVPSRMNVGQILETHLGWAAYNLGKKISKLLDEGNYSEVKSLVLEIYKNDRKMMARLNEMTDAEIVEYSRSLRGGVPVAASVFEGPKTDEIERLLVLAGKDPSGQEVLYDGVTGEKFDRKVTVGCKYMLKLHHLVNDKIHARSIGSYSLITQQPLGGKSHFGGQRFGEMECWALQAYGATFALQEMLTIKSDDVVGRVNVYDSIVRGDNDFYYGVPESFNVMMNELRALCLNVEFCSDLEKKKDFGDLALAASGQ</sequence>
<evidence type="ECO:0000255" key="1">
    <source>
        <dbReference type="HAMAP-Rule" id="MF_01321"/>
    </source>
</evidence>
<gene>
    <name evidence="1" type="primary">rpoB</name>
    <name type="ordered locus">NSE_0678</name>
</gene>
<proteinExistence type="inferred from homology"/>
<accession>Q2GD90</accession>
<keyword id="KW-0240">DNA-directed RNA polymerase</keyword>
<keyword id="KW-0548">Nucleotidyltransferase</keyword>
<keyword id="KW-0804">Transcription</keyword>
<keyword id="KW-0808">Transferase</keyword>